<dbReference type="EC" id="2.5.1.141" evidence="1"/>
<dbReference type="EMBL" id="CP000503">
    <property type="protein sequence ID" value="ABM22979.1"/>
    <property type="molecule type" value="Genomic_DNA"/>
</dbReference>
<dbReference type="SMR" id="A1RE84"/>
<dbReference type="KEGG" id="shw:Sputw3181_0126"/>
<dbReference type="HOGENOM" id="CLU_029631_0_2_6"/>
<dbReference type="UniPathway" id="UPA00834">
    <property type="reaction ID" value="UER00712"/>
</dbReference>
<dbReference type="Proteomes" id="UP000002597">
    <property type="component" value="Chromosome"/>
</dbReference>
<dbReference type="GO" id="GO:0005886">
    <property type="term" value="C:plasma membrane"/>
    <property type="evidence" value="ECO:0007669"/>
    <property type="project" value="UniProtKB-SubCell"/>
</dbReference>
<dbReference type="GO" id="GO:0008495">
    <property type="term" value="F:protoheme IX farnesyltransferase activity"/>
    <property type="evidence" value="ECO:0007669"/>
    <property type="project" value="UniProtKB-UniRule"/>
</dbReference>
<dbReference type="GO" id="GO:0048034">
    <property type="term" value="P:heme O biosynthetic process"/>
    <property type="evidence" value="ECO:0007669"/>
    <property type="project" value="UniProtKB-UniRule"/>
</dbReference>
<dbReference type="CDD" id="cd13957">
    <property type="entry name" value="PT_UbiA_Cox10"/>
    <property type="match status" value="1"/>
</dbReference>
<dbReference type="FunFam" id="1.10.357.140:FF:000001">
    <property type="entry name" value="Protoheme IX farnesyltransferase"/>
    <property type="match status" value="1"/>
</dbReference>
<dbReference type="Gene3D" id="1.10.357.140">
    <property type="entry name" value="UbiA prenyltransferase"/>
    <property type="match status" value="1"/>
</dbReference>
<dbReference type="HAMAP" id="MF_00154">
    <property type="entry name" value="CyoE_CtaB"/>
    <property type="match status" value="1"/>
</dbReference>
<dbReference type="InterPro" id="IPR006369">
    <property type="entry name" value="Protohaem_IX_farnesylTrfase"/>
</dbReference>
<dbReference type="InterPro" id="IPR000537">
    <property type="entry name" value="UbiA_prenyltransferase"/>
</dbReference>
<dbReference type="InterPro" id="IPR030470">
    <property type="entry name" value="UbiA_prenylTrfase_CS"/>
</dbReference>
<dbReference type="InterPro" id="IPR044878">
    <property type="entry name" value="UbiA_sf"/>
</dbReference>
<dbReference type="NCBIfam" id="TIGR01473">
    <property type="entry name" value="cyoE_ctaB"/>
    <property type="match status" value="1"/>
</dbReference>
<dbReference type="NCBIfam" id="NF003349">
    <property type="entry name" value="PRK04375.1-2"/>
    <property type="match status" value="1"/>
</dbReference>
<dbReference type="PANTHER" id="PTHR43448:SF7">
    <property type="entry name" value="4-HYDROXYBENZOATE SOLANESYLTRANSFERASE"/>
    <property type="match status" value="1"/>
</dbReference>
<dbReference type="PANTHER" id="PTHR43448">
    <property type="entry name" value="PROTOHEME IX FARNESYLTRANSFERASE, MITOCHONDRIAL"/>
    <property type="match status" value="1"/>
</dbReference>
<dbReference type="Pfam" id="PF01040">
    <property type="entry name" value="UbiA"/>
    <property type="match status" value="1"/>
</dbReference>
<dbReference type="PROSITE" id="PS00943">
    <property type="entry name" value="UBIA"/>
    <property type="match status" value="1"/>
</dbReference>
<keyword id="KW-0997">Cell inner membrane</keyword>
<keyword id="KW-1003">Cell membrane</keyword>
<keyword id="KW-0350">Heme biosynthesis</keyword>
<keyword id="KW-0472">Membrane</keyword>
<keyword id="KW-0808">Transferase</keyword>
<keyword id="KW-0812">Transmembrane</keyword>
<keyword id="KW-1133">Transmembrane helix</keyword>
<name>CYOE2_SHESW</name>
<accession>A1RE84</accession>
<organism>
    <name type="scientific">Shewanella sp. (strain W3-18-1)</name>
    <dbReference type="NCBI Taxonomy" id="351745"/>
    <lineage>
        <taxon>Bacteria</taxon>
        <taxon>Pseudomonadati</taxon>
        <taxon>Pseudomonadota</taxon>
        <taxon>Gammaproteobacteria</taxon>
        <taxon>Alteromonadales</taxon>
        <taxon>Shewanellaceae</taxon>
        <taxon>Shewanella</taxon>
    </lineage>
</organism>
<feature type="chain" id="PRO_5000203610" description="Protoheme IX farnesyltransferase 2">
    <location>
        <begin position="1"/>
        <end position="301"/>
    </location>
</feature>
<feature type="transmembrane region" description="Helical" evidence="1">
    <location>
        <begin position="29"/>
        <end position="49"/>
    </location>
</feature>
<feature type="transmembrane region" description="Helical" evidence="1">
    <location>
        <begin position="51"/>
        <end position="71"/>
    </location>
</feature>
<feature type="transmembrane region" description="Helical" evidence="1">
    <location>
        <begin position="101"/>
        <end position="121"/>
    </location>
</feature>
<feature type="transmembrane region" description="Helical" evidence="1">
    <location>
        <begin position="123"/>
        <end position="143"/>
    </location>
</feature>
<feature type="transmembrane region" description="Helical" evidence="1">
    <location>
        <begin position="150"/>
        <end position="170"/>
    </location>
</feature>
<feature type="transmembrane region" description="Helical" evidence="1">
    <location>
        <begin position="177"/>
        <end position="197"/>
    </location>
</feature>
<feature type="transmembrane region" description="Helical" evidence="1">
    <location>
        <begin position="223"/>
        <end position="243"/>
    </location>
</feature>
<feature type="transmembrane region" description="Helical" evidence="1">
    <location>
        <begin position="244"/>
        <end position="264"/>
    </location>
</feature>
<feature type="transmembrane region" description="Helical" evidence="1">
    <location>
        <begin position="281"/>
        <end position="301"/>
    </location>
</feature>
<reference key="1">
    <citation type="submission" date="2006-12" db="EMBL/GenBank/DDBJ databases">
        <title>Complete sequence of Shewanella sp. W3-18-1.</title>
        <authorList>
            <consortium name="US DOE Joint Genome Institute"/>
            <person name="Copeland A."/>
            <person name="Lucas S."/>
            <person name="Lapidus A."/>
            <person name="Barry K."/>
            <person name="Detter J.C."/>
            <person name="Glavina del Rio T."/>
            <person name="Hammon N."/>
            <person name="Israni S."/>
            <person name="Dalin E."/>
            <person name="Tice H."/>
            <person name="Pitluck S."/>
            <person name="Chain P."/>
            <person name="Malfatti S."/>
            <person name="Shin M."/>
            <person name="Vergez L."/>
            <person name="Schmutz J."/>
            <person name="Larimer F."/>
            <person name="Land M."/>
            <person name="Hauser L."/>
            <person name="Kyrpides N."/>
            <person name="Lykidis A."/>
            <person name="Tiedje J."/>
            <person name="Richardson P."/>
        </authorList>
    </citation>
    <scope>NUCLEOTIDE SEQUENCE [LARGE SCALE GENOMIC DNA]</scope>
    <source>
        <strain>W3-18-1</strain>
    </source>
</reference>
<comment type="function">
    <text evidence="1">Converts heme B (protoheme IX) to heme O by substitution of the vinyl group on carbon 2 of heme B porphyrin ring with a hydroxyethyl farnesyl side group.</text>
</comment>
<comment type="catalytic activity">
    <reaction evidence="1">
        <text>heme b + (2E,6E)-farnesyl diphosphate + H2O = Fe(II)-heme o + diphosphate</text>
        <dbReference type="Rhea" id="RHEA:28070"/>
        <dbReference type="ChEBI" id="CHEBI:15377"/>
        <dbReference type="ChEBI" id="CHEBI:33019"/>
        <dbReference type="ChEBI" id="CHEBI:60344"/>
        <dbReference type="ChEBI" id="CHEBI:60530"/>
        <dbReference type="ChEBI" id="CHEBI:175763"/>
        <dbReference type="EC" id="2.5.1.141"/>
    </reaction>
</comment>
<comment type="pathway">
    <text evidence="1">Porphyrin-containing compound metabolism; heme O biosynthesis; heme O from protoheme: step 1/1.</text>
</comment>
<comment type="subcellular location">
    <subcellularLocation>
        <location evidence="1">Cell inner membrane</location>
        <topology evidence="1">Multi-pass membrane protein</topology>
    </subcellularLocation>
</comment>
<comment type="miscellaneous">
    <text evidence="1">Carbon 2 of the heme B porphyrin ring is defined according to the Fischer nomenclature.</text>
</comment>
<comment type="similarity">
    <text evidence="1">Belongs to the UbiA prenyltransferase family. Protoheme IX farnesyltransferase subfamily.</text>
</comment>
<gene>
    <name evidence="1" type="primary">cyoE2</name>
    <name type="ordered locus">Sputw3181_0126</name>
</gene>
<evidence type="ECO:0000255" key="1">
    <source>
        <dbReference type="HAMAP-Rule" id="MF_00154"/>
    </source>
</evidence>
<protein>
    <recommendedName>
        <fullName evidence="1">Protoheme IX farnesyltransferase 2</fullName>
        <ecNumber evidence="1">2.5.1.141</ecNumber>
    </recommendedName>
    <alternativeName>
        <fullName evidence="1">Heme B farnesyltransferase 2</fullName>
    </alternativeName>
    <alternativeName>
        <fullName evidence="1">Heme O synthase 2</fullName>
    </alternativeName>
</protein>
<sequence length="301" mass="33286">MAKPLTITSSHSHFSLAWRAYFEMTKPKVVALMLLTVLVGMCLAVPTAVPVQPLIAGMFGIALMAGSAAALNHLIDRRIDGMMARTYNRPLPKGRVSAKRALIFAASIGGLGFVVLYVLVNPLTAWLTFASLIGYALVYTAYLKRATSQNIVIGGLAGAMPPLLGWTAVTNQFHGHALLLVIIIFTWTPPHFWALAIHRRAEYAKVDIPMLPVTHGVEFTKTCILLYTVLLAIACLLPVLVGMCGPMYFVCSSLLSSVFIYKAWQLKYRDHDGLAMQVFRFSIYHLMLLFMALLIDHYLWS</sequence>
<proteinExistence type="inferred from homology"/>